<dbReference type="EMBL" id="AB046532">
    <property type="protein sequence ID" value="BAB18778.1"/>
    <property type="status" value="ALT_INIT"/>
    <property type="molecule type" value="mRNA"/>
</dbReference>
<dbReference type="RefSeq" id="NP_990007.2">
    <property type="nucleotide sequence ID" value="NM_204676.3"/>
</dbReference>
<dbReference type="SMR" id="Q9DEB6"/>
<dbReference type="STRING" id="9031.ENSGALP00000009094"/>
<dbReference type="GlyGen" id="Q9DEB6">
    <property type="glycosylation" value="2 sites"/>
</dbReference>
<dbReference type="PaxDb" id="9031-ENSGALP00000009094"/>
<dbReference type="Ensembl" id="ENSGALT00010032829.1">
    <property type="protein sequence ID" value="ENSGALP00010019442.1"/>
    <property type="gene ID" value="ENSGALG00010013660.1"/>
</dbReference>
<dbReference type="GeneID" id="395397"/>
<dbReference type="KEGG" id="gga:395397"/>
<dbReference type="CTD" id="1044"/>
<dbReference type="VEuPathDB" id="HostDB:geneid_395397"/>
<dbReference type="eggNOG" id="KOG0848">
    <property type="taxonomic scope" value="Eukaryota"/>
</dbReference>
<dbReference type="GeneTree" id="ENSGT00940000164078"/>
<dbReference type="HOGENOM" id="CLU_073177_1_0_1"/>
<dbReference type="InParanoid" id="Q9DEB6"/>
<dbReference type="OMA" id="DLHHGQP"/>
<dbReference type="OrthoDB" id="6159439at2759"/>
<dbReference type="PhylomeDB" id="Q9DEB6"/>
<dbReference type="TreeFam" id="TF351605"/>
<dbReference type="PRO" id="PR:Q9DEB6"/>
<dbReference type="Proteomes" id="UP000000539">
    <property type="component" value="Chromosome 13"/>
</dbReference>
<dbReference type="Bgee" id="ENSGALG00000005679">
    <property type="expression patterns" value="Expressed in colon"/>
</dbReference>
<dbReference type="GO" id="GO:0005634">
    <property type="term" value="C:nucleus"/>
    <property type="evidence" value="ECO:0000318"/>
    <property type="project" value="GO_Central"/>
</dbReference>
<dbReference type="GO" id="GO:0003700">
    <property type="term" value="F:DNA-binding transcription factor activity"/>
    <property type="evidence" value="ECO:0000318"/>
    <property type="project" value="GO_Central"/>
</dbReference>
<dbReference type="GO" id="GO:0000981">
    <property type="term" value="F:DNA-binding transcription factor activity, RNA polymerase II-specific"/>
    <property type="evidence" value="ECO:0007669"/>
    <property type="project" value="InterPro"/>
</dbReference>
<dbReference type="GO" id="GO:0008327">
    <property type="term" value="F:methyl-CpG binding"/>
    <property type="evidence" value="ECO:0000250"/>
    <property type="project" value="UniProtKB"/>
</dbReference>
<dbReference type="GO" id="GO:0000977">
    <property type="term" value="F:RNA polymerase II transcription regulatory region sequence-specific DNA binding"/>
    <property type="evidence" value="ECO:0000318"/>
    <property type="project" value="GO_Central"/>
</dbReference>
<dbReference type="GO" id="GO:0000976">
    <property type="term" value="F:transcription cis-regulatory region binding"/>
    <property type="evidence" value="ECO:0000250"/>
    <property type="project" value="UniProtKB"/>
</dbReference>
<dbReference type="GO" id="GO:0009948">
    <property type="term" value="P:anterior/posterior axis specification"/>
    <property type="evidence" value="ECO:0000318"/>
    <property type="project" value="GO_Central"/>
</dbReference>
<dbReference type="GO" id="GO:0030154">
    <property type="term" value="P:cell differentiation"/>
    <property type="evidence" value="ECO:0000318"/>
    <property type="project" value="GO_Central"/>
</dbReference>
<dbReference type="GO" id="GO:0048565">
    <property type="term" value="P:digestive tract development"/>
    <property type="evidence" value="ECO:0000318"/>
    <property type="project" value="GO_Central"/>
</dbReference>
<dbReference type="GO" id="GO:0009880">
    <property type="term" value="P:embryonic pattern specification"/>
    <property type="evidence" value="ECO:0000318"/>
    <property type="project" value="GO_Central"/>
</dbReference>
<dbReference type="GO" id="GO:0045944">
    <property type="term" value="P:positive regulation of transcription by RNA polymerase II"/>
    <property type="evidence" value="ECO:0000250"/>
    <property type="project" value="UniProtKB"/>
</dbReference>
<dbReference type="GO" id="GO:0006357">
    <property type="term" value="P:regulation of transcription by RNA polymerase II"/>
    <property type="evidence" value="ECO:0000318"/>
    <property type="project" value="GO_Central"/>
</dbReference>
<dbReference type="CDD" id="cd00086">
    <property type="entry name" value="homeodomain"/>
    <property type="match status" value="1"/>
</dbReference>
<dbReference type="FunFam" id="1.10.10.60:FF:000089">
    <property type="entry name" value="Caudal type homeobox 4"/>
    <property type="match status" value="1"/>
</dbReference>
<dbReference type="Gene3D" id="1.10.10.60">
    <property type="entry name" value="Homeodomain-like"/>
    <property type="match status" value="1"/>
</dbReference>
<dbReference type="InterPro" id="IPR006820">
    <property type="entry name" value="Caudal_activation_dom"/>
</dbReference>
<dbReference type="InterPro" id="IPR047152">
    <property type="entry name" value="Caudal_homeobox"/>
</dbReference>
<dbReference type="InterPro" id="IPR001356">
    <property type="entry name" value="HD"/>
</dbReference>
<dbReference type="InterPro" id="IPR020479">
    <property type="entry name" value="HD_metazoa"/>
</dbReference>
<dbReference type="InterPro" id="IPR017970">
    <property type="entry name" value="Homeobox_CS"/>
</dbReference>
<dbReference type="InterPro" id="IPR009057">
    <property type="entry name" value="Homeodomain-like_sf"/>
</dbReference>
<dbReference type="InterPro" id="IPR000047">
    <property type="entry name" value="HTH_motif"/>
</dbReference>
<dbReference type="PANTHER" id="PTHR24332">
    <property type="entry name" value="HOMEOBOX PROTEIN CDX"/>
    <property type="match status" value="1"/>
</dbReference>
<dbReference type="PANTHER" id="PTHR24332:SF16">
    <property type="entry name" value="HOMEOBOX PROTEIN CDX-1"/>
    <property type="match status" value="1"/>
</dbReference>
<dbReference type="Pfam" id="PF04731">
    <property type="entry name" value="Caudal_act"/>
    <property type="match status" value="1"/>
</dbReference>
<dbReference type="Pfam" id="PF00046">
    <property type="entry name" value="Homeodomain"/>
    <property type="match status" value="1"/>
</dbReference>
<dbReference type="PRINTS" id="PR00024">
    <property type="entry name" value="HOMEOBOX"/>
</dbReference>
<dbReference type="PRINTS" id="PR00031">
    <property type="entry name" value="HTHREPRESSR"/>
</dbReference>
<dbReference type="SMART" id="SM00389">
    <property type="entry name" value="HOX"/>
    <property type="match status" value="1"/>
</dbReference>
<dbReference type="SUPFAM" id="SSF46689">
    <property type="entry name" value="Homeodomain-like"/>
    <property type="match status" value="1"/>
</dbReference>
<dbReference type="PROSITE" id="PS00027">
    <property type="entry name" value="HOMEOBOX_1"/>
    <property type="match status" value="1"/>
</dbReference>
<dbReference type="PROSITE" id="PS50071">
    <property type="entry name" value="HOMEOBOX_2"/>
    <property type="match status" value="1"/>
</dbReference>
<evidence type="ECO:0000250" key="1">
    <source>
        <dbReference type="UniProtKB" id="P47902"/>
    </source>
</evidence>
<evidence type="ECO:0000255" key="2">
    <source>
        <dbReference type="PROSITE-ProRule" id="PRU00108"/>
    </source>
</evidence>
<evidence type="ECO:0000256" key="3">
    <source>
        <dbReference type="SAM" id="MobiDB-lite"/>
    </source>
</evidence>
<evidence type="ECO:0000305" key="4"/>
<proteinExistence type="evidence at transcript level"/>
<keyword id="KW-0010">Activator</keyword>
<keyword id="KW-0238">DNA-binding</keyword>
<keyword id="KW-0371">Homeobox</keyword>
<keyword id="KW-0539">Nucleus</keyword>
<keyword id="KW-1185">Reference proteome</keyword>
<keyword id="KW-0804">Transcription</keyword>
<keyword id="KW-0805">Transcription regulation</keyword>
<feature type="chain" id="PRO_0000253462" description="Homeobox protein CDX-1">
    <location>
        <begin position="1"/>
        <end position="260"/>
    </location>
</feature>
<feature type="DNA-binding region" description="Homeobox" evidence="2">
    <location>
        <begin position="149"/>
        <end position="208"/>
    </location>
</feature>
<feature type="region of interest" description="Interaction with DNA" evidence="1">
    <location>
        <begin position="152"/>
        <end position="173"/>
    </location>
</feature>
<feature type="region of interest" description="Interaction with 5-mCpG DNA" evidence="1">
    <location>
        <begin position="191"/>
        <end position="202"/>
    </location>
</feature>
<feature type="region of interest" description="Disordered" evidence="3">
    <location>
        <begin position="204"/>
        <end position="260"/>
    </location>
</feature>
<feature type="compositionally biased region" description="Low complexity" evidence="3">
    <location>
        <begin position="213"/>
        <end position="223"/>
    </location>
</feature>
<feature type="compositionally biased region" description="Low complexity" evidence="3">
    <location>
        <begin position="240"/>
        <end position="252"/>
    </location>
</feature>
<protein>
    <recommendedName>
        <fullName>Homeobox protein CDX-1</fullName>
    </recommendedName>
    <alternativeName>
        <fullName>Caudal-type homeodomain protein</fullName>
    </alternativeName>
</protein>
<organism>
    <name type="scientific">Gallus gallus</name>
    <name type="common">Chicken</name>
    <dbReference type="NCBI Taxonomy" id="9031"/>
    <lineage>
        <taxon>Eukaryota</taxon>
        <taxon>Metazoa</taxon>
        <taxon>Chordata</taxon>
        <taxon>Craniata</taxon>
        <taxon>Vertebrata</taxon>
        <taxon>Euteleostomi</taxon>
        <taxon>Archelosauria</taxon>
        <taxon>Archosauria</taxon>
        <taxon>Dinosauria</taxon>
        <taxon>Saurischia</taxon>
        <taxon>Theropoda</taxon>
        <taxon>Coelurosauria</taxon>
        <taxon>Aves</taxon>
        <taxon>Neognathae</taxon>
        <taxon>Galloanserae</taxon>
        <taxon>Galliformes</taxon>
        <taxon>Phasianidae</taxon>
        <taxon>Phasianinae</taxon>
        <taxon>Gallus</taxon>
    </lineage>
</organism>
<comment type="function">
    <text evidence="1">Plays a role in transcriptional regulation. Involved in activated KRAS-mediated transcriptional activation of PRKD1. Binds to the PRKD1 promoter. Could play a role in the terminal differentiation of the intestine. Binds preferentially to methylated DNA.</text>
</comment>
<comment type="subcellular location">
    <subcellularLocation>
        <location evidence="2">Nucleus</location>
    </subcellularLocation>
</comment>
<comment type="similarity">
    <text evidence="4">Belongs to the Caudal homeobox family.</text>
</comment>
<comment type="sequence caution" evidence="4">
    <conflict type="erroneous initiation">
        <sequence resource="EMBL-CDS" id="BAB18778"/>
    </conflict>
</comment>
<name>CDX1_CHICK</name>
<accession>Q9DEB6</accession>
<sequence length="260" mass="28844">MYVGYLLDKDTNMYPSPVRHPSLNLNPQNYVPGPPQYSDFASYHHVPGINNDPHHGQPAAAWGSPYTPAKEDWHSYGTAAASAATNPGQFGFSPPDFNPMQPHAGSGLLPPAISSSVPQLSPNAQRRTPYEWMRRSIPSTSSSGKTRTKDKYRVVYTDHQRLELEKEFHYSRYITIRRKAELAAALGLTERQVKIWFQNRRAKERKVNKKKLQQQSQPTSTTTPTPPAVGTPGPMGTLCSGSAPSLVSSSPLTIKEEFMP</sequence>
<gene>
    <name type="primary">CDX1</name>
    <name type="synonym">CDXA</name>
</gene>
<reference key="1">
    <citation type="submission" date="2000-07" db="EMBL/GenBank/DDBJ databases">
        <title>Gallus gallus caudal-type homeodomain protein (CdxA) mRNA.</title>
        <authorList>
            <person name="Ishii Y."/>
        </authorList>
    </citation>
    <scope>NUCLEOTIDE SEQUENCE [MRNA]</scope>
</reference>